<sequence length="355" mass="37504">MDDNKKRALAAALGQIERQFGKGAVMRMGDQERQGIPAISTGSLGLDIALGIGGLPKGRIVEIYGPESSGKTTLTLSVIAEAQKNGATCAFVDAEHALDPEYAGKLGVNVDDLLVSQPDTGEQALEITDMLVRSNAVDVIIVDSVAALVPKAEIEGEMGDMHVGLQARLMSQALRKITGNIKNANCLVIFINQIRMKIGVMFGSPETTTGGNALKFYASVRLDIRRTGAVKEGDEVVGSETRVKIVKNKVSPPFRQAEFQILYGKGIYRNGEIIDLGVSQGLVEKSGAWYAYQGNKIGQGKANAAKYLAENPAIGAEIEKQIREKLLKAGAAAEAGKAAAVDASADDVADAEAGY</sequence>
<evidence type="ECO:0000255" key="1">
    <source>
        <dbReference type="HAMAP-Rule" id="MF_00268"/>
    </source>
</evidence>
<gene>
    <name evidence="1" type="primary">recA</name>
    <name type="ordered locus">PputGB1_1231</name>
</gene>
<dbReference type="EMBL" id="CP000926">
    <property type="protein sequence ID" value="ABY97138.1"/>
    <property type="molecule type" value="Genomic_DNA"/>
</dbReference>
<dbReference type="RefSeq" id="WP_012270915.1">
    <property type="nucleotide sequence ID" value="NC_010322.1"/>
</dbReference>
<dbReference type="SMR" id="B0KT20"/>
<dbReference type="KEGG" id="ppg:PputGB1_1231"/>
<dbReference type="eggNOG" id="COG0468">
    <property type="taxonomic scope" value="Bacteria"/>
</dbReference>
<dbReference type="HOGENOM" id="CLU_040469_3_2_6"/>
<dbReference type="Proteomes" id="UP000002157">
    <property type="component" value="Chromosome"/>
</dbReference>
<dbReference type="GO" id="GO:0005829">
    <property type="term" value="C:cytosol"/>
    <property type="evidence" value="ECO:0007669"/>
    <property type="project" value="TreeGrafter"/>
</dbReference>
<dbReference type="GO" id="GO:0005524">
    <property type="term" value="F:ATP binding"/>
    <property type="evidence" value="ECO:0007669"/>
    <property type="project" value="UniProtKB-UniRule"/>
</dbReference>
<dbReference type="GO" id="GO:0016887">
    <property type="term" value="F:ATP hydrolysis activity"/>
    <property type="evidence" value="ECO:0007669"/>
    <property type="project" value="InterPro"/>
</dbReference>
<dbReference type="GO" id="GO:0140664">
    <property type="term" value="F:ATP-dependent DNA damage sensor activity"/>
    <property type="evidence" value="ECO:0007669"/>
    <property type="project" value="InterPro"/>
</dbReference>
<dbReference type="GO" id="GO:0003684">
    <property type="term" value="F:damaged DNA binding"/>
    <property type="evidence" value="ECO:0007669"/>
    <property type="project" value="UniProtKB-UniRule"/>
</dbReference>
<dbReference type="GO" id="GO:0003697">
    <property type="term" value="F:single-stranded DNA binding"/>
    <property type="evidence" value="ECO:0007669"/>
    <property type="project" value="UniProtKB-UniRule"/>
</dbReference>
<dbReference type="GO" id="GO:0006310">
    <property type="term" value="P:DNA recombination"/>
    <property type="evidence" value="ECO:0007669"/>
    <property type="project" value="UniProtKB-UniRule"/>
</dbReference>
<dbReference type="GO" id="GO:0006281">
    <property type="term" value="P:DNA repair"/>
    <property type="evidence" value="ECO:0007669"/>
    <property type="project" value="UniProtKB-UniRule"/>
</dbReference>
<dbReference type="GO" id="GO:0009432">
    <property type="term" value="P:SOS response"/>
    <property type="evidence" value="ECO:0007669"/>
    <property type="project" value="UniProtKB-UniRule"/>
</dbReference>
<dbReference type="CDD" id="cd00983">
    <property type="entry name" value="RecA"/>
    <property type="match status" value="1"/>
</dbReference>
<dbReference type="FunFam" id="3.40.50.300:FF:000087">
    <property type="entry name" value="Recombinase RecA"/>
    <property type="match status" value="1"/>
</dbReference>
<dbReference type="Gene3D" id="3.40.50.300">
    <property type="entry name" value="P-loop containing nucleotide triphosphate hydrolases"/>
    <property type="match status" value="1"/>
</dbReference>
<dbReference type="HAMAP" id="MF_00268">
    <property type="entry name" value="RecA"/>
    <property type="match status" value="1"/>
</dbReference>
<dbReference type="InterPro" id="IPR003593">
    <property type="entry name" value="AAA+_ATPase"/>
</dbReference>
<dbReference type="InterPro" id="IPR013765">
    <property type="entry name" value="DNA_recomb/repair_RecA"/>
</dbReference>
<dbReference type="InterPro" id="IPR020584">
    <property type="entry name" value="DNA_recomb/repair_RecA_CS"/>
</dbReference>
<dbReference type="InterPro" id="IPR027417">
    <property type="entry name" value="P-loop_NTPase"/>
</dbReference>
<dbReference type="InterPro" id="IPR049261">
    <property type="entry name" value="RecA-like_C"/>
</dbReference>
<dbReference type="InterPro" id="IPR049428">
    <property type="entry name" value="RecA-like_N"/>
</dbReference>
<dbReference type="InterPro" id="IPR020588">
    <property type="entry name" value="RecA_ATP-bd"/>
</dbReference>
<dbReference type="InterPro" id="IPR023400">
    <property type="entry name" value="RecA_C_sf"/>
</dbReference>
<dbReference type="InterPro" id="IPR020587">
    <property type="entry name" value="RecA_monomer-monomer_interface"/>
</dbReference>
<dbReference type="NCBIfam" id="TIGR02012">
    <property type="entry name" value="tigrfam_recA"/>
    <property type="match status" value="1"/>
</dbReference>
<dbReference type="PANTHER" id="PTHR45900:SF1">
    <property type="entry name" value="MITOCHONDRIAL DNA REPAIR PROTEIN RECA HOMOLOG-RELATED"/>
    <property type="match status" value="1"/>
</dbReference>
<dbReference type="PANTHER" id="PTHR45900">
    <property type="entry name" value="RECA"/>
    <property type="match status" value="1"/>
</dbReference>
<dbReference type="Pfam" id="PF00154">
    <property type="entry name" value="RecA"/>
    <property type="match status" value="1"/>
</dbReference>
<dbReference type="Pfam" id="PF21096">
    <property type="entry name" value="RecA_C"/>
    <property type="match status" value="1"/>
</dbReference>
<dbReference type="PRINTS" id="PR00142">
    <property type="entry name" value="RECA"/>
</dbReference>
<dbReference type="SMART" id="SM00382">
    <property type="entry name" value="AAA"/>
    <property type="match status" value="1"/>
</dbReference>
<dbReference type="SUPFAM" id="SSF52540">
    <property type="entry name" value="P-loop containing nucleoside triphosphate hydrolases"/>
    <property type="match status" value="1"/>
</dbReference>
<dbReference type="SUPFAM" id="SSF54752">
    <property type="entry name" value="RecA protein, C-terminal domain"/>
    <property type="match status" value="1"/>
</dbReference>
<dbReference type="PROSITE" id="PS00321">
    <property type="entry name" value="RECA_1"/>
    <property type="match status" value="1"/>
</dbReference>
<dbReference type="PROSITE" id="PS50162">
    <property type="entry name" value="RECA_2"/>
    <property type="match status" value="1"/>
</dbReference>
<dbReference type="PROSITE" id="PS50163">
    <property type="entry name" value="RECA_3"/>
    <property type="match status" value="1"/>
</dbReference>
<accession>B0KT20</accession>
<protein>
    <recommendedName>
        <fullName evidence="1">Protein RecA</fullName>
    </recommendedName>
    <alternativeName>
        <fullName evidence="1">Recombinase A</fullName>
    </alternativeName>
</protein>
<name>RECA_PSEPG</name>
<feature type="chain" id="PRO_1000078675" description="Protein RecA">
    <location>
        <begin position="1"/>
        <end position="355"/>
    </location>
</feature>
<feature type="binding site" evidence="1">
    <location>
        <begin position="65"/>
        <end position="72"/>
    </location>
    <ligand>
        <name>ATP</name>
        <dbReference type="ChEBI" id="CHEBI:30616"/>
    </ligand>
</feature>
<keyword id="KW-0067">ATP-binding</keyword>
<keyword id="KW-0963">Cytoplasm</keyword>
<keyword id="KW-0227">DNA damage</keyword>
<keyword id="KW-0233">DNA recombination</keyword>
<keyword id="KW-0234">DNA repair</keyword>
<keyword id="KW-0238">DNA-binding</keyword>
<keyword id="KW-0547">Nucleotide-binding</keyword>
<keyword id="KW-0742">SOS response</keyword>
<comment type="function">
    <text evidence="1">Can catalyze the hydrolysis of ATP in the presence of single-stranded DNA, the ATP-dependent uptake of single-stranded DNA by duplex DNA, and the ATP-dependent hybridization of homologous single-stranded DNAs. It interacts with LexA causing its activation and leading to its autocatalytic cleavage.</text>
</comment>
<comment type="subcellular location">
    <subcellularLocation>
        <location evidence="1">Cytoplasm</location>
    </subcellularLocation>
</comment>
<comment type="similarity">
    <text evidence="1">Belongs to the RecA family.</text>
</comment>
<proteinExistence type="inferred from homology"/>
<reference key="1">
    <citation type="submission" date="2008-01" db="EMBL/GenBank/DDBJ databases">
        <title>Complete sequence of Pseudomonas putida GB-1.</title>
        <authorList>
            <consortium name="US DOE Joint Genome Institute"/>
            <person name="Copeland A."/>
            <person name="Lucas S."/>
            <person name="Lapidus A."/>
            <person name="Barry K."/>
            <person name="Glavina del Rio T."/>
            <person name="Dalin E."/>
            <person name="Tice H."/>
            <person name="Pitluck S."/>
            <person name="Bruce D."/>
            <person name="Goodwin L."/>
            <person name="Chertkov O."/>
            <person name="Brettin T."/>
            <person name="Detter J.C."/>
            <person name="Han C."/>
            <person name="Kuske C.R."/>
            <person name="Schmutz J."/>
            <person name="Larimer F."/>
            <person name="Land M."/>
            <person name="Hauser L."/>
            <person name="Kyrpides N."/>
            <person name="Kim E."/>
            <person name="McCarthy J.K."/>
            <person name="Richardson P."/>
        </authorList>
    </citation>
    <scope>NUCLEOTIDE SEQUENCE [LARGE SCALE GENOMIC DNA]</scope>
    <source>
        <strain>GB-1</strain>
    </source>
</reference>
<organism>
    <name type="scientific">Pseudomonas putida (strain GB-1)</name>
    <dbReference type="NCBI Taxonomy" id="76869"/>
    <lineage>
        <taxon>Bacteria</taxon>
        <taxon>Pseudomonadati</taxon>
        <taxon>Pseudomonadota</taxon>
        <taxon>Gammaproteobacteria</taxon>
        <taxon>Pseudomonadales</taxon>
        <taxon>Pseudomonadaceae</taxon>
        <taxon>Pseudomonas</taxon>
    </lineage>
</organism>